<proteinExistence type="evidence at transcript level"/>
<accession>Q90309</accession>
<reference key="1">
    <citation type="journal article" date="1996" name="Vision Res.">
        <title>Molecular cloning and characterization of the putative ultraviolet-sensitive visual pigment of goldfish.</title>
        <authorList>
            <person name="Hisatomi O."/>
            <person name="Satoh T."/>
            <person name="Barthel L.K."/>
            <person name="Stenkamp D.L."/>
            <person name="Raymond P.A."/>
            <person name="Tokunaga F."/>
        </authorList>
    </citation>
    <scope>NUCLEOTIDE SEQUENCE [MRNA]</scope>
</reference>
<sequence length="336" mass="37445">MDAWTYQFGNLSKISPFEGPQYHLAPKWAFYLQAAFMGFVFFVGTPLNAIVLFVTMKYKKLRQPLNYILVNISLGGFIFDTFSVSQVFFSALRGYYFFGYTLCAMEAAMGSIAGLVTGWSLAVLAFERYVVICKPFGSFKFGQSQALGAVALTWIIGIGCATPPFWGWSRYIPEGIGTACGPDWYTKNEEYNTESYTYFLLVSCFMMPIMIITFSYSQLLGALRAVAAQQAESASTQKAEKEVSRMVVVMVGSFVVCYGPYAITALYFSYAEDSNKDYRLVAIPSLFSKSSCVYNPLIYAFMNKQFNACIMETVFGKKIDESSEVSSKTETSSVSA</sequence>
<evidence type="ECO:0000250" key="1"/>
<evidence type="ECO:0000255" key="2"/>
<evidence type="ECO:0000255" key="3">
    <source>
        <dbReference type="PROSITE-ProRule" id="PRU00521"/>
    </source>
</evidence>
<protein>
    <recommendedName>
        <fullName>Ultraviolet-sensitive opsin</fullName>
    </recommendedName>
    <alternativeName>
        <fullName>Ultraviolet cone photoreceptor pigment</fullName>
    </alternativeName>
</protein>
<keyword id="KW-0157">Chromophore</keyword>
<keyword id="KW-1015">Disulfide bond</keyword>
<keyword id="KW-0297">G-protein coupled receptor</keyword>
<keyword id="KW-0325">Glycoprotein</keyword>
<keyword id="KW-0472">Membrane</keyword>
<keyword id="KW-0597">Phosphoprotein</keyword>
<keyword id="KW-0600">Photoreceptor protein</keyword>
<keyword id="KW-0675">Receptor</keyword>
<keyword id="KW-1185">Reference proteome</keyword>
<keyword id="KW-0681">Retinal protein</keyword>
<keyword id="KW-0716">Sensory transduction</keyword>
<keyword id="KW-0807">Transducer</keyword>
<keyword id="KW-0812">Transmembrane</keyword>
<keyword id="KW-1133">Transmembrane helix</keyword>
<keyword id="KW-0844">Vision</keyword>
<comment type="function">
    <text>Visual pigments are the light-absorbing molecules that mediate vision. They consist of an apoprotein, opsin, covalently linked to cis-retinal.</text>
</comment>
<comment type="subcellular location">
    <subcellularLocation>
        <location>Membrane</location>
        <topology>Multi-pass membrane protein</topology>
    </subcellularLocation>
</comment>
<comment type="PTM">
    <text evidence="1">Phosphorylated on some or all of the serine and threonine residues present in the C-terminal region.</text>
</comment>
<comment type="similarity">
    <text evidence="3">Belongs to the G-protein coupled receptor 1 family. Opsin subfamily.</text>
</comment>
<organism>
    <name type="scientific">Carassius auratus</name>
    <name type="common">Goldfish</name>
    <dbReference type="NCBI Taxonomy" id="7957"/>
    <lineage>
        <taxon>Eukaryota</taxon>
        <taxon>Metazoa</taxon>
        <taxon>Chordata</taxon>
        <taxon>Craniata</taxon>
        <taxon>Vertebrata</taxon>
        <taxon>Euteleostomi</taxon>
        <taxon>Actinopterygii</taxon>
        <taxon>Neopterygii</taxon>
        <taxon>Teleostei</taxon>
        <taxon>Ostariophysi</taxon>
        <taxon>Cypriniformes</taxon>
        <taxon>Cyprinidae</taxon>
        <taxon>Cyprininae</taxon>
        <taxon>Carassius</taxon>
    </lineage>
</organism>
<feature type="chain" id="PRO_0000197806" description="Ultraviolet-sensitive opsin">
    <location>
        <begin position="1"/>
        <end position="336"/>
    </location>
</feature>
<feature type="topological domain" description="Extracellular">
    <location>
        <begin position="1"/>
        <end position="29"/>
    </location>
</feature>
<feature type="transmembrane region" description="Helical; Name=1" evidence="2">
    <location>
        <begin position="30"/>
        <end position="54"/>
    </location>
</feature>
<feature type="topological domain" description="Cytoplasmic">
    <location>
        <begin position="55"/>
        <end position="66"/>
    </location>
</feature>
<feature type="transmembrane region" description="Helical; Name=2" evidence="2">
    <location>
        <begin position="67"/>
        <end position="91"/>
    </location>
</feature>
<feature type="topological domain" description="Extracellular">
    <location>
        <begin position="92"/>
        <end position="106"/>
    </location>
</feature>
<feature type="transmembrane region" description="Helical; Name=3" evidence="2">
    <location>
        <begin position="107"/>
        <end position="126"/>
    </location>
</feature>
<feature type="topological domain" description="Cytoplasmic">
    <location>
        <begin position="127"/>
        <end position="145"/>
    </location>
</feature>
<feature type="transmembrane region" description="Helical; Name=4" evidence="2">
    <location>
        <begin position="146"/>
        <end position="169"/>
    </location>
</feature>
<feature type="topological domain" description="Extracellular">
    <location>
        <begin position="170"/>
        <end position="195"/>
    </location>
</feature>
<feature type="transmembrane region" description="Helical; Name=5" evidence="2">
    <location>
        <begin position="196"/>
        <end position="223"/>
    </location>
</feature>
<feature type="topological domain" description="Cytoplasmic">
    <location>
        <begin position="224"/>
        <end position="245"/>
    </location>
</feature>
<feature type="transmembrane region" description="Helical; Name=6" evidence="2">
    <location>
        <begin position="246"/>
        <end position="269"/>
    </location>
</feature>
<feature type="topological domain" description="Extracellular">
    <location>
        <begin position="270"/>
        <end position="277"/>
    </location>
</feature>
<feature type="transmembrane region" description="Helical; Name=7" evidence="2">
    <location>
        <begin position="278"/>
        <end position="302"/>
    </location>
</feature>
<feature type="topological domain" description="Cytoplasmic">
    <location>
        <begin position="303"/>
        <end position="336"/>
    </location>
</feature>
<feature type="modified residue" description="N6-(retinylidene)lysine" evidence="1">
    <location>
        <position position="289"/>
    </location>
</feature>
<feature type="glycosylation site" description="N-linked (GlcNAc...) asparagine" evidence="2">
    <location>
        <position position="10"/>
    </location>
</feature>
<feature type="disulfide bond" evidence="3">
    <location>
        <begin position="103"/>
        <end position="180"/>
    </location>
</feature>
<name>OPSUV_CARAU</name>
<dbReference type="EMBL" id="D85863">
    <property type="protein sequence ID" value="BAA12889.1"/>
    <property type="molecule type" value="mRNA"/>
</dbReference>
<dbReference type="RefSeq" id="XP_026100307.1">
    <property type="nucleotide sequence ID" value="XM_026244522.1"/>
</dbReference>
<dbReference type="SMR" id="Q90309"/>
<dbReference type="GeneID" id="113071156"/>
<dbReference type="OrthoDB" id="6142583at2759"/>
<dbReference type="Proteomes" id="UP000515129">
    <property type="component" value="Unplaced"/>
</dbReference>
<dbReference type="GO" id="GO:0016020">
    <property type="term" value="C:membrane"/>
    <property type="evidence" value="ECO:0007669"/>
    <property type="project" value="UniProtKB-SubCell"/>
</dbReference>
<dbReference type="GO" id="GO:0004930">
    <property type="term" value="F:G protein-coupled receptor activity"/>
    <property type="evidence" value="ECO:0007669"/>
    <property type="project" value="UniProtKB-KW"/>
</dbReference>
<dbReference type="GO" id="GO:0009881">
    <property type="term" value="F:photoreceptor activity"/>
    <property type="evidence" value="ECO:0007669"/>
    <property type="project" value="UniProtKB-KW"/>
</dbReference>
<dbReference type="GO" id="GO:0007602">
    <property type="term" value="P:phototransduction"/>
    <property type="evidence" value="ECO:0007669"/>
    <property type="project" value="UniProtKB-KW"/>
</dbReference>
<dbReference type="GO" id="GO:0007601">
    <property type="term" value="P:visual perception"/>
    <property type="evidence" value="ECO:0007669"/>
    <property type="project" value="UniProtKB-KW"/>
</dbReference>
<dbReference type="FunFam" id="1.20.1070.10:FF:000018">
    <property type="entry name" value="Rhodopsin"/>
    <property type="match status" value="1"/>
</dbReference>
<dbReference type="Gene3D" id="1.20.1070.10">
    <property type="entry name" value="Rhodopsin 7-helix transmembrane proteins"/>
    <property type="match status" value="1"/>
</dbReference>
<dbReference type="InterPro" id="IPR050125">
    <property type="entry name" value="GPCR_opsins"/>
</dbReference>
<dbReference type="InterPro" id="IPR000276">
    <property type="entry name" value="GPCR_Rhodpsn"/>
</dbReference>
<dbReference type="InterPro" id="IPR017452">
    <property type="entry name" value="GPCR_Rhodpsn_7TM"/>
</dbReference>
<dbReference type="InterPro" id="IPR001760">
    <property type="entry name" value="Opsin"/>
</dbReference>
<dbReference type="InterPro" id="IPR001521">
    <property type="entry name" value="Opsin_blue"/>
</dbReference>
<dbReference type="InterPro" id="IPR027430">
    <property type="entry name" value="Retinal_BS"/>
</dbReference>
<dbReference type="PANTHER" id="PTHR24240">
    <property type="entry name" value="OPSIN"/>
    <property type="match status" value="1"/>
</dbReference>
<dbReference type="Pfam" id="PF00001">
    <property type="entry name" value="7tm_1"/>
    <property type="match status" value="1"/>
</dbReference>
<dbReference type="PRINTS" id="PR00237">
    <property type="entry name" value="GPCRRHODOPSN"/>
</dbReference>
<dbReference type="PRINTS" id="PR00238">
    <property type="entry name" value="OPSIN"/>
</dbReference>
<dbReference type="PRINTS" id="PR00574">
    <property type="entry name" value="OPSINBLUE"/>
</dbReference>
<dbReference type="SUPFAM" id="SSF81321">
    <property type="entry name" value="Family A G protein-coupled receptor-like"/>
    <property type="match status" value="1"/>
</dbReference>
<dbReference type="PROSITE" id="PS00237">
    <property type="entry name" value="G_PROTEIN_RECEP_F1_1"/>
    <property type="match status" value="1"/>
</dbReference>
<dbReference type="PROSITE" id="PS50262">
    <property type="entry name" value="G_PROTEIN_RECEP_F1_2"/>
    <property type="match status" value="1"/>
</dbReference>
<dbReference type="PROSITE" id="PS00238">
    <property type="entry name" value="OPSIN"/>
    <property type="match status" value="1"/>
</dbReference>